<proteinExistence type="inferred from homology"/>
<comment type="function">
    <text evidence="1">Acts as a chaperone.</text>
</comment>
<comment type="induction">
    <text evidence="1">By stress conditions e.g. heat shock.</text>
</comment>
<comment type="similarity">
    <text evidence="1">Belongs to the heat shock protein 70 family.</text>
</comment>
<sequence>MGKIIGIDLGTTNSCVYVMEGKEPKCITNPNGGRTTPSVVAFTDKDRLVGDAAKRQAITNSARTIFAVKRLMGRRADSPEVVHWKEHAPYKIVAASNGDAAVEIDGREYSPQEISAIILSKLKADAEAYLGESVSEAVITVPAYFNDAQRQATKDAGRIAGLDVKRIINEPTAASLAYGFDKKANEKIAVFDLGGGTFDVSILEVGDSVVEVLATNGDTFLGGEDFDQRIINYLVEEFKKEQGIDLSKDNMALQRLKDSAENAKKELSTAMETEINLPFITADQSGPKHLLIKLTRAKLEQLVMDLVGRTIEPCSKALEDAGLQTSNIDEVILVGGMTRMPLVQKKVAEFFGKEPNRSVNPDEVVAMGAAIQGGILAGDVKDVLLLDVTPLSLGIETMGGVFTKLIDRNTTIPTRKSQTFTTAADNQPSVSIHVLQGERPMASDNMTLARFDLTGIPPAPRGVPQIEVAFNIDANGIVNVSAKDLGTGKEQSIQITASSGLSEADIEKLIREAESHASEDKKKQEIIEVRNHADGLIYSTEKSIKDLEGKIDAELQADITSKIEALKKVMEGEDSAAIKKATDELASASHKLAEQLYKQTQETSGASGDPTDTSASSSKSGDDVVDADFTEVK</sequence>
<gene>
    <name evidence="1" type="primary">dnaK</name>
    <name type="ordered locus">LI0912</name>
</gene>
<organism>
    <name type="scientific">Lawsonia intracellularis (strain PHE/MN1-00)</name>
    <dbReference type="NCBI Taxonomy" id="363253"/>
    <lineage>
        <taxon>Bacteria</taxon>
        <taxon>Pseudomonadati</taxon>
        <taxon>Thermodesulfobacteriota</taxon>
        <taxon>Desulfovibrionia</taxon>
        <taxon>Desulfovibrionales</taxon>
        <taxon>Desulfovibrionaceae</taxon>
        <taxon>Lawsonia</taxon>
    </lineage>
</organism>
<evidence type="ECO:0000255" key="1">
    <source>
        <dbReference type="HAMAP-Rule" id="MF_00332"/>
    </source>
</evidence>
<evidence type="ECO:0000256" key="2">
    <source>
        <dbReference type="SAM" id="MobiDB-lite"/>
    </source>
</evidence>
<feature type="chain" id="PRO_1000059592" description="Chaperone protein DnaK">
    <location>
        <begin position="1"/>
        <end position="633"/>
    </location>
</feature>
<feature type="region of interest" description="Disordered" evidence="2">
    <location>
        <begin position="592"/>
        <end position="633"/>
    </location>
</feature>
<feature type="compositionally biased region" description="Polar residues" evidence="2">
    <location>
        <begin position="597"/>
        <end position="619"/>
    </location>
</feature>
<feature type="compositionally biased region" description="Acidic residues" evidence="2">
    <location>
        <begin position="623"/>
        <end position="633"/>
    </location>
</feature>
<feature type="modified residue" description="Phosphothreonine; by autocatalysis" evidence="1">
    <location>
        <position position="197"/>
    </location>
</feature>
<accession>Q1MPW1</accession>
<dbReference type="EMBL" id="AM180252">
    <property type="protein sequence ID" value="CAJ54966.1"/>
    <property type="molecule type" value="Genomic_DNA"/>
</dbReference>
<dbReference type="RefSeq" id="WP_011526995.1">
    <property type="nucleotide sequence ID" value="NC_008011.1"/>
</dbReference>
<dbReference type="SMR" id="Q1MPW1"/>
<dbReference type="STRING" id="363253.LI0912"/>
<dbReference type="KEGG" id="lip:LI0912"/>
<dbReference type="eggNOG" id="COG0443">
    <property type="taxonomic scope" value="Bacteria"/>
</dbReference>
<dbReference type="HOGENOM" id="CLU_005965_2_4_7"/>
<dbReference type="OrthoDB" id="9766019at2"/>
<dbReference type="Proteomes" id="UP000002430">
    <property type="component" value="Chromosome"/>
</dbReference>
<dbReference type="GO" id="GO:0005524">
    <property type="term" value="F:ATP binding"/>
    <property type="evidence" value="ECO:0007669"/>
    <property type="project" value="UniProtKB-UniRule"/>
</dbReference>
<dbReference type="GO" id="GO:0140662">
    <property type="term" value="F:ATP-dependent protein folding chaperone"/>
    <property type="evidence" value="ECO:0007669"/>
    <property type="project" value="InterPro"/>
</dbReference>
<dbReference type="GO" id="GO:0051082">
    <property type="term" value="F:unfolded protein binding"/>
    <property type="evidence" value="ECO:0007669"/>
    <property type="project" value="InterPro"/>
</dbReference>
<dbReference type="CDD" id="cd10234">
    <property type="entry name" value="ASKHA_NBD_HSP70_DnaK-like"/>
    <property type="match status" value="1"/>
</dbReference>
<dbReference type="FunFam" id="2.60.34.10:FF:000014">
    <property type="entry name" value="Chaperone protein DnaK HSP70"/>
    <property type="match status" value="1"/>
</dbReference>
<dbReference type="FunFam" id="1.20.1270.10:FF:000001">
    <property type="entry name" value="Molecular chaperone DnaK"/>
    <property type="match status" value="1"/>
</dbReference>
<dbReference type="FunFam" id="3.30.420.40:FF:000004">
    <property type="entry name" value="Molecular chaperone DnaK"/>
    <property type="match status" value="1"/>
</dbReference>
<dbReference type="FunFam" id="3.90.640.10:FF:000003">
    <property type="entry name" value="Molecular chaperone DnaK"/>
    <property type="match status" value="1"/>
</dbReference>
<dbReference type="Gene3D" id="1.20.1270.10">
    <property type="match status" value="1"/>
</dbReference>
<dbReference type="Gene3D" id="3.30.420.40">
    <property type="match status" value="2"/>
</dbReference>
<dbReference type="Gene3D" id="3.90.640.10">
    <property type="entry name" value="Actin, Chain A, domain 4"/>
    <property type="match status" value="1"/>
</dbReference>
<dbReference type="Gene3D" id="2.60.34.10">
    <property type="entry name" value="Substrate Binding Domain Of DNAk, Chain A, domain 1"/>
    <property type="match status" value="1"/>
</dbReference>
<dbReference type="HAMAP" id="MF_00332">
    <property type="entry name" value="DnaK"/>
    <property type="match status" value="1"/>
</dbReference>
<dbReference type="InterPro" id="IPR043129">
    <property type="entry name" value="ATPase_NBD"/>
</dbReference>
<dbReference type="InterPro" id="IPR012725">
    <property type="entry name" value="Chaperone_DnaK"/>
</dbReference>
<dbReference type="InterPro" id="IPR018181">
    <property type="entry name" value="Heat_shock_70_CS"/>
</dbReference>
<dbReference type="InterPro" id="IPR029048">
    <property type="entry name" value="HSP70_C_sf"/>
</dbReference>
<dbReference type="InterPro" id="IPR029047">
    <property type="entry name" value="HSP70_peptide-bd_sf"/>
</dbReference>
<dbReference type="InterPro" id="IPR013126">
    <property type="entry name" value="Hsp_70_fam"/>
</dbReference>
<dbReference type="NCBIfam" id="NF001413">
    <property type="entry name" value="PRK00290.1"/>
    <property type="match status" value="1"/>
</dbReference>
<dbReference type="NCBIfam" id="NF003520">
    <property type="entry name" value="PRK05183.1"/>
    <property type="match status" value="1"/>
</dbReference>
<dbReference type="NCBIfam" id="TIGR02350">
    <property type="entry name" value="prok_dnaK"/>
    <property type="match status" value="1"/>
</dbReference>
<dbReference type="PANTHER" id="PTHR19375">
    <property type="entry name" value="HEAT SHOCK PROTEIN 70KDA"/>
    <property type="match status" value="1"/>
</dbReference>
<dbReference type="Pfam" id="PF00012">
    <property type="entry name" value="HSP70"/>
    <property type="match status" value="1"/>
</dbReference>
<dbReference type="PRINTS" id="PR00301">
    <property type="entry name" value="HEATSHOCK70"/>
</dbReference>
<dbReference type="SUPFAM" id="SSF53067">
    <property type="entry name" value="Actin-like ATPase domain"/>
    <property type="match status" value="2"/>
</dbReference>
<dbReference type="SUPFAM" id="SSF100934">
    <property type="entry name" value="Heat shock protein 70kD (HSP70), C-terminal subdomain"/>
    <property type="match status" value="1"/>
</dbReference>
<dbReference type="SUPFAM" id="SSF100920">
    <property type="entry name" value="Heat shock protein 70kD (HSP70), peptide-binding domain"/>
    <property type="match status" value="1"/>
</dbReference>
<dbReference type="PROSITE" id="PS00297">
    <property type="entry name" value="HSP70_1"/>
    <property type="match status" value="1"/>
</dbReference>
<dbReference type="PROSITE" id="PS00329">
    <property type="entry name" value="HSP70_2"/>
    <property type="match status" value="1"/>
</dbReference>
<dbReference type="PROSITE" id="PS01036">
    <property type="entry name" value="HSP70_3"/>
    <property type="match status" value="1"/>
</dbReference>
<protein>
    <recommendedName>
        <fullName evidence="1">Chaperone protein DnaK</fullName>
    </recommendedName>
    <alternativeName>
        <fullName evidence="1">HSP70</fullName>
    </alternativeName>
    <alternativeName>
        <fullName evidence="1">Heat shock 70 kDa protein</fullName>
    </alternativeName>
    <alternativeName>
        <fullName evidence="1">Heat shock protein 70</fullName>
    </alternativeName>
</protein>
<keyword id="KW-0067">ATP-binding</keyword>
<keyword id="KW-0143">Chaperone</keyword>
<keyword id="KW-0547">Nucleotide-binding</keyword>
<keyword id="KW-0597">Phosphoprotein</keyword>
<keyword id="KW-1185">Reference proteome</keyword>
<keyword id="KW-0346">Stress response</keyword>
<name>DNAK_LAWIP</name>
<reference key="1">
    <citation type="submission" date="2005-11" db="EMBL/GenBank/DDBJ databases">
        <title>The complete genome sequence of Lawsonia intracellularis: the causative agent of proliferative enteropathy.</title>
        <authorList>
            <person name="Kaur K."/>
            <person name="Zhang Q."/>
            <person name="Beckler D."/>
            <person name="Munir S."/>
            <person name="Li L."/>
            <person name="Kinsley K."/>
            <person name="Herron L."/>
            <person name="Peterson A."/>
            <person name="May B."/>
            <person name="Singh S."/>
            <person name="Gebhart C."/>
            <person name="Kapur V."/>
        </authorList>
    </citation>
    <scope>NUCLEOTIDE SEQUENCE [LARGE SCALE GENOMIC DNA]</scope>
    <source>
        <strain>PHE/MN1-00</strain>
    </source>
</reference>